<sequence>MFASRAIRMMSMRPMARTMATKAAAPVKVPVQLFGLDGTYATALYTAAAKESDLSKTEGSLAKLRDVFAQQPEVAQIVSNPTLSHEDKQTVVNVLSQAVGGDKTLTNFLTVISDNNRLALIPGIIEKFETLVNASKGLVEATVTSASELDKKTVNRIQAAIAGSSFVGEGELKLNLKVNPDILGGLIVEVAERTVDVSVASKIARLNHVLSEPI</sequence>
<reference evidence="8" key="1">
    <citation type="journal article" date="2004" name="Nature">
        <title>Genome evolution in yeasts.</title>
        <authorList>
            <person name="Dujon B."/>
            <person name="Sherman D."/>
            <person name="Fischer G."/>
            <person name="Durrens P."/>
            <person name="Casaregola S."/>
            <person name="Lafontaine I."/>
            <person name="de Montigny J."/>
            <person name="Marck C."/>
            <person name="Neuveglise C."/>
            <person name="Talla E."/>
            <person name="Goffard N."/>
            <person name="Frangeul L."/>
            <person name="Aigle M."/>
            <person name="Anthouard V."/>
            <person name="Babour A."/>
            <person name="Barbe V."/>
            <person name="Barnay S."/>
            <person name="Blanchin S."/>
            <person name="Beckerich J.-M."/>
            <person name="Beyne E."/>
            <person name="Bleykasten C."/>
            <person name="Boisrame A."/>
            <person name="Boyer J."/>
            <person name="Cattolico L."/>
            <person name="Confanioleri F."/>
            <person name="de Daruvar A."/>
            <person name="Despons L."/>
            <person name="Fabre E."/>
            <person name="Fairhead C."/>
            <person name="Ferry-Dumazet H."/>
            <person name="Groppi A."/>
            <person name="Hantraye F."/>
            <person name="Hennequin C."/>
            <person name="Jauniaux N."/>
            <person name="Joyet P."/>
            <person name="Kachouri R."/>
            <person name="Kerrest A."/>
            <person name="Koszul R."/>
            <person name="Lemaire M."/>
            <person name="Lesur I."/>
            <person name="Ma L."/>
            <person name="Muller H."/>
            <person name="Nicaud J.-M."/>
            <person name="Nikolski M."/>
            <person name="Oztas S."/>
            <person name="Ozier-Kalogeropoulos O."/>
            <person name="Pellenz S."/>
            <person name="Potier S."/>
            <person name="Richard G.-F."/>
            <person name="Straub M.-L."/>
            <person name="Suleau A."/>
            <person name="Swennen D."/>
            <person name="Tekaia F."/>
            <person name="Wesolowski-Louvel M."/>
            <person name="Westhof E."/>
            <person name="Wirth B."/>
            <person name="Zeniou-Meyer M."/>
            <person name="Zivanovic Y."/>
            <person name="Bolotin-Fukuhara M."/>
            <person name="Thierry A."/>
            <person name="Bouchier C."/>
            <person name="Caudron B."/>
            <person name="Scarpelli C."/>
            <person name="Gaillardin C."/>
            <person name="Weissenbach J."/>
            <person name="Wincker P."/>
            <person name="Souciet J.-L."/>
        </authorList>
    </citation>
    <scope>NUCLEOTIDE SEQUENCE [LARGE SCALE GENOMIC DNA]</scope>
    <source>
        <strain>CLIB 122 / E 150</strain>
    </source>
</reference>
<reference evidence="5" key="2">
    <citation type="journal article" date="2015" name="Biochem. J.">
        <title>The purification and characterization of ATP synthase complexes from the mitochondria of four fungal species.</title>
        <authorList>
            <person name="Liu S."/>
            <person name="Charlesworth T.J."/>
            <person name="Bason J.V."/>
            <person name="Montgomery M.G."/>
            <person name="Harbour M.E."/>
            <person name="Fearnley I.M."/>
            <person name="Walker J.E."/>
        </authorList>
    </citation>
    <scope>IDENTIFICATION IN ATP SYNTHASE COMPLEX</scope>
    <scope>FUNCTION OF ATP SYNTHASE COMPLEX</scope>
    <scope>SUBUNIT</scope>
    <scope>SUBCELLULAR LOCATION</scope>
    <scope>MASS SPECTROMETRY</scope>
    <scope>IDENTIFICATION BY MASS SPECTROMETRY</scope>
    <source>
        <strain evidence="4">CLIB 122 / E 150</strain>
    </source>
</reference>
<reference evidence="5" key="3">
    <citation type="journal article" date="2016" name="Mol. Cell">
        <title>Structure of a Complete ATP Synthase Dimer Reveals the Molecular Basis of Inner Mitochondrial Membrane Morphology.</title>
        <authorList>
            <person name="Hahn A."/>
            <person name="Parey K."/>
            <person name="Bublitz M."/>
            <person name="Mills D.J."/>
            <person name="Zickermann V."/>
            <person name="Vonck J."/>
            <person name="Kuehlbrandt W."/>
            <person name="Meier T."/>
        </authorList>
    </citation>
    <scope>STRUCTURE BY ELECTRON MICROSCOPY (7.7 ANGSTROMS) OF DIMERIC ATP SYNTHASE COMPLEX</scope>
    <scope>FUNCTION</scope>
    <scope>SUBUNIT</scope>
    <scope>SUBCELLULAR LOCATION</scope>
</reference>
<evidence type="ECO:0000250" key="1">
    <source>
        <dbReference type="UniProtKB" id="P09457"/>
    </source>
</evidence>
<evidence type="ECO:0000269" key="2">
    <source>
    </source>
</evidence>
<evidence type="ECO:0000269" key="3">
    <source>
    </source>
</evidence>
<evidence type="ECO:0000303" key="4">
    <source>
    </source>
</evidence>
<evidence type="ECO:0000305" key="5"/>
<evidence type="ECO:0000305" key="6">
    <source>
    </source>
</evidence>
<evidence type="ECO:0000312" key="7">
    <source>
        <dbReference type="EMBL" id="CAG80939.2"/>
    </source>
</evidence>
<evidence type="ECO:0000312" key="8">
    <source>
        <dbReference type="Proteomes" id="UP000001300"/>
    </source>
</evidence>
<feature type="transit peptide" description="Mitochondrion" evidence="2">
    <location>
        <begin position="1"/>
        <end position="24"/>
    </location>
</feature>
<feature type="chain" id="PRO_0000445326" description="ATP synthase subunit 5, mitochondrial" evidence="5">
    <location>
        <begin position="25"/>
        <end position="214"/>
    </location>
</feature>
<protein>
    <recommendedName>
        <fullName evidence="1">ATP synthase subunit 5, mitochondrial</fullName>
        <shortName evidence="1">ATP synthase chain 5</shortName>
    </recommendedName>
    <alternativeName>
        <fullName evidence="1">Oligomycin sensitivity conferral protein</fullName>
        <shortName evidence="1">OSCP</shortName>
    </alternativeName>
</protein>
<gene>
    <name evidence="1" type="primary">ATP5</name>
    <name evidence="1" type="synonym">OSCP</name>
    <name evidence="7" type="ordered locus">YALI0_D12584g</name>
</gene>
<dbReference type="EMBL" id="CR382130">
    <property type="protein sequence ID" value="CAG80939.2"/>
    <property type="molecule type" value="Genomic_DNA"/>
</dbReference>
<dbReference type="RefSeq" id="XP_502751.2">
    <property type="nucleotide sequence ID" value="XM_502751.2"/>
</dbReference>
<dbReference type="SMR" id="Q6C9B1"/>
<dbReference type="FunCoup" id="Q6C9B1">
    <property type="interactions" value="729"/>
</dbReference>
<dbReference type="STRING" id="284591.Q6C9B1"/>
<dbReference type="EnsemblFungi" id="CAG80939">
    <property type="protein sequence ID" value="CAG80939"/>
    <property type="gene ID" value="YALI0_D12584g"/>
</dbReference>
<dbReference type="KEGG" id="yli:2910146"/>
<dbReference type="VEuPathDB" id="FungiDB:YALI0_D12584g"/>
<dbReference type="HOGENOM" id="CLU_085114_0_0_1"/>
<dbReference type="InParanoid" id="Q6C9B1"/>
<dbReference type="OMA" id="MVDNIQD"/>
<dbReference type="OrthoDB" id="115735at4891"/>
<dbReference type="Proteomes" id="UP000001300">
    <property type="component" value="Chromosome D"/>
</dbReference>
<dbReference type="GO" id="GO:0005743">
    <property type="term" value="C:mitochondrial inner membrane"/>
    <property type="evidence" value="ECO:0007669"/>
    <property type="project" value="UniProtKB-SubCell"/>
</dbReference>
<dbReference type="GO" id="GO:0045259">
    <property type="term" value="C:proton-transporting ATP synthase complex"/>
    <property type="evidence" value="ECO:0007669"/>
    <property type="project" value="UniProtKB-KW"/>
</dbReference>
<dbReference type="GO" id="GO:0046933">
    <property type="term" value="F:proton-transporting ATP synthase activity, rotational mechanism"/>
    <property type="evidence" value="ECO:0007669"/>
    <property type="project" value="EnsemblFungi"/>
</dbReference>
<dbReference type="GO" id="GO:0042776">
    <property type="term" value="P:proton motive force-driven mitochondrial ATP synthesis"/>
    <property type="evidence" value="ECO:0000318"/>
    <property type="project" value="GO_Central"/>
</dbReference>
<dbReference type="Gene3D" id="1.10.520.20">
    <property type="entry name" value="N-terminal domain of the delta subunit of the F1F0-ATP synthase"/>
    <property type="match status" value="1"/>
</dbReference>
<dbReference type="HAMAP" id="MF_01416">
    <property type="entry name" value="ATP_synth_delta_bact"/>
    <property type="match status" value="1"/>
</dbReference>
<dbReference type="InterPro" id="IPR026015">
    <property type="entry name" value="ATP_synth_OSCP/delta_N_sf"/>
</dbReference>
<dbReference type="InterPro" id="IPR000711">
    <property type="entry name" value="ATPase_OSCP/dsu"/>
</dbReference>
<dbReference type="NCBIfam" id="TIGR01145">
    <property type="entry name" value="ATP_synt_delta"/>
    <property type="match status" value="1"/>
</dbReference>
<dbReference type="PANTHER" id="PTHR11910">
    <property type="entry name" value="ATP SYNTHASE DELTA CHAIN"/>
    <property type="match status" value="1"/>
</dbReference>
<dbReference type="Pfam" id="PF00213">
    <property type="entry name" value="OSCP"/>
    <property type="match status" value="1"/>
</dbReference>
<dbReference type="PRINTS" id="PR00125">
    <property type="entry name" value="ATPASEDELTA"/>
</dbReference>
<dbReference type="SUPFAM" id="SSF47928">
    <property type="entry name" value="N-terminal domain of the delta subunit of the F1F0-ATP synthase"/>
    <property type="match status" value="1"/>
</dbReference>
<comment type="function">
    <text evidence="2 3">Mitochondrial membrane ATP synthase (F(1)F(0) ATP synthase or Complex V) produces ATP from ADP in the presence of a proton gradient across the membrane which is generated by electron transport complexes of the respiratory chain (PubMed:25759169). F-type ATP synthases consist of two structural domains, F(1) - containing the extramembraneous catalytic core, and F(0) - containing the membrane proton channel, linked together by a central stalk and a peripheral stalk (PubMed:27373333). During catalysis, ATP synthesis in the catalytic domain of F(1) is coupled via a rotary mechanism of the central stalk subunits to proton translocation (PubMed:27373333). Part of the complex F(0) domain and the peripheral stalk, which acts as a stator to hold the catalytic alpha/ATP1(3)beta/ATP2(3) subcomplex and subunit a/ATP6 static relative to the rotary elements (PubMed:27373333).</text>
</comment>
<comment type="subunit">
    <text evidence="2 3">F-type ATP synthases have 2 components, the catalytic core F(1) and the membrane-embedded component F(0), linked together by a central stalk and a peripheral stalk (PubMed:27373333). The central stalk, also called rotor shaft, is often seen as part of F(1) (PubMed:27373333). The peripheral stalk is seen as part of F(0) (PubMed:27373333). F(0) contains the membrane channel next to the rotor (PubMed:27373333). F-type ATP synthases form dimers but each monomer functions independently in ATP generation (PubMed:27373333). The dimer consists of 17 different polypeptides: ATP1 (subunit alpha, 3 molecules per monomer, part of F(1)), ATP2 (subunit beta, 3 copies per monomer, part of F(1)), ATP3 (subunit gamma, part of the central stalk), ATP4 (subunit b, part of the peripheral stalk), ATP5/OSCP (subunit 5/OSCP, part of the peripheral stalk), ATP6 (subunit a, part of the peripheral stalk), ATP7 (subunit d, part of the peripheral stalk), ATP8 (subunit 8, part of the peripheral stalk), OLI1 (subunit c, part of the rotor, 10 molecules per monomer), ATP14 (subunit h, part of the peripheral stalk), ATP15 (subunit epsilon, part of the central stalk), ATP16 (subunit delta, part of the central stalk), ATP17 (subunit f, part of the peripheral stalk), ATP18 (subunit i/j, part of the peripheral stalk), ATP19 (subunit k, dimer-specific, at interface between monomers), ATP20 (subunit g, at interface between monomers), TIM11 (subunit e, at interface between monomers) (PubMed:25759169, PubMed:27373333).</text>
</comment>
<comment type="subcellular location">
    <subcellularLocation>
        <location evidence="6">Mitochondrion inner membrane</location>
        <topology evidence="6">Peripheral membrane protein</topology>
        <orientation evidence="6">Matrix side</orientation>
    </subcellularLocation>
    <text evidence="6">The F-type ATP synthase complex is anchored in the mitochondrial inner membrane via the F(0) domain with the F(1) domain and the peripheral stalk extending into the mitochondrial matrix.</text>
</comment>
<comment type="mass spectrometry"/>
<comment type="similarity">
    <text evidence="5">Belongs to the ATPase delta chain family.</text>
</comment>
<proteinExistence type="evidence at protein level"/>
<organism evidence="8">
    <name type="scientific">Yarrowia lipolytica (strain CLIB 122 / E 150)</name>
    <name type="common">Yeast</name>
    <name type="synonym">Candida lipolytica</name>
    <dbReference type="NCBI Taxonomy" id="284591"/>
    <lineage>
        <taxon>Eukaryota</taxon>
        <taxon>Fungi</taxon>
        <taxon>Dikarya</taxon>
        <taxon>Ascomycota</taxon>
        <taxon>Saccharomycotina</taxon>
        <taxon>Dipodascomycetes</taxon>
        <taxon>Dipodascales</taxon>
        <taxon>Dipodascales incertae sedis</taxon>
        <taxon>Yarrowia</taxon>
    </lineage>
</organism>
<accession>Q6C9B1</accession>
<name>ATPO_YARLI</name>
<keyword id="KW-0066">ATP synthesis</keyword>
<keyword id="KW-0138">CF(0)</keyword>
<keyword id="KW-0375">Hydrogen ion transport</keyword>
<keyword id="KW-0406">Ion transport</keyword>
<keyword id="KW-0472">Membrane</keyword>
<keyword id="KW-0496">Mitochondrion</keyword>
<keyword id="KW-0999">Mitochondrion inner membrane</keyword>
<keyword id="KW-1185">Reference proteome</keyword>
<keyword id="KW-0809">Transit peptide</keyword>
<keyword id="KW-0813">Transport</keyword>